<feature type="chain" id="PRO_1000114658" description="Nucleoid-associated protein Teth39_2199">
    <location>
        <begin position="1"/>
        <end position="111"/>
    </location>
</feature>
<dbReference type="EMBL" id="CP000924">
    <property type="protein sequence ID" value="ABY95821.1"/>
    <property type="molecule type" value="Genomic_DNA"/>
</dbReference>
<dbReference type="RefSeq" id="WP_004399453.1">
    <property type="nucleotide sequence ID" value="NC_010321.1"/>
</dbReference>
<dbReference type="SMR" id="B0K801"/>
<dbReference type="STRING" id="340099.Teth39_2199"/>
<dbReference type="KEGG" id="tpd:Teth39_2199"/>
<dbReference type="eggNOG" id="COG0718">
    <property type="taxonomic scope" value="Bacteria"/>
</dbReference>
<dbReference type="HOGENOM" id="CLU_140930_1_0_9"/>
<dbReference type="Proteomes" id="UP000002156">
    <property type="component" value="Chromosome"/>
</dbReference>
<dbReference type="GO" id="GO:0043590">
    <property type="term" value="C:bacterial nucleoid"/>
    <property type="evidence" value="ECO:0007669"/>
    <property type="project" value="UniProtKB-UniRule"/>
</dbReference>
<dbReference type="GO" id="GO:0005829">
    <property type="term" value="C:cytosol"/>
    <property type="evidence" value="ECO:0007669"/>
    <property type="project" value="TreeGrafter"/>
</dbReference>
<dbReference type="GO" id="GO:0003677">
    <property type="term" value="F:DNA binding"/>
    <property type="evidence" value="ECO:0007669"/>
    <property type="project" value="UniProtKB-UniRule"/>
</dbReference>
<dbReference type="Gene3D" id="3.30.1310.10">
    <property type="entry name" value="Nucleoid-associated protein YbaB-like domain"/>
    <property type="match status" value="1"/>
</dbReference>
<dbReference type="HAMAP" id="MF_00274">
    <property type="entry name" value="DNA_YbaB_EbfC"/>
    <property type="match status" value="1"/>
</dbReference>
<dbReference type="InterPro" id="IPR036894">
    <property type="entry name" value="YbaB-like_sf"/>
</dbReference>
<dbReference type="InterPro" id="IPR004401">
    <property type="entry name" value="YbaB/EbfC"/>
</dbReference>
<dbReference type="NCBIfam" id="TIGR00103">
    <property type="entry name" value="DNA_YbaB_EbfC"/>
    <property type="match status" value="1"/>
</dbReference>
<dbReference type="PANTHER" id="PTHR33449">
    <property type="entry name" value="NUCLEOID-ASSOCIATED PROTEIN YBAB"/>
    <property type="match status" value="1"/>
</dbReference>
<dbReference type="PANTHER" id="PTHR33449:SF1">
    <property type="entry name" value="NUCLEOID-ASSOCIATED PROTEIN YBAB"/>
    <property type="match status" value="1"/>
</dbReference>
<dbReference type="Pfam" id="PF02575">
    <property type="entry name" value="YbaB_DNA_bd"/>
    <property type="match status" value="1"/>
</dbReference>
<dbReference type="PIRSF" id="PIRSF004555">
    <property type="entry name" value="UCP004555"/>
    <property type="match status" value="1"/>
</dbReference>
<dbReference type="SUPFAM" id="SSF82607">
    <property type="entry name" value="YbaB-like"/>
    <property type="match status" value="1"/>
</dbReference>
<proteinExistence type="inferred from homology"/>
<keyword id="KW-0963">Cytoplasm</keyword>
<keyword id="KW-0238">DNA-binding</keyword>
<keyword id="KW-1185">Reference proteome</keyword>
<accession>B0K801</accession>
<reference key="1">
    <citation type="submission" date="2008-01" db="EMBL/GenBank/DDBJ databases">
        <title>Complete sequence of Thermoanaerobacter pseudethanolicus 39E.</title>
        <authorList>
            <person name="Copeland A."/>
            <person name="Lucas S."/>
            <person name="Lapidus A."/>
            <person name="Barry K."/>
            <person name="Glavina del Rio T."/>
            <person name="Dalin E."/>
            <person name="Tice H."/>
            <person name="Pitluck S."/>
            <person name="Bruce D."/>
            <person name="Goodwin L."/>
            <person name="Saunders E."/>
            <person name="Brettin T."/>
            <person name="Detter J.C."/>
            <person name="Han C."/>
            <person name="Schmutz J."/>
            <person name="Larimer F."/>
            <person name="Land M."/>
            <person name="Hauser L."/>
            <person name="Kyrpides N."/>
            <person name="Lykidis A."/>
            <person name="Hemme C."/>
            <person name="Fields M.W."/>
            <person name="He Z."/>
            <person name="Zhou J."/>
            <person name="Richardson P."/>
        </authorList>
    </citation>
    <scope>NUCLEOTIDE SEQUENCE [LARGE SCALE GENOMIC DNA]</scope>
    <source>
        <strain>ATCC 33223 / DSM 2355 / 39E</strain>
    </source>
</reference>
<evidence type="ECO:0000255" key="1">
    <source>
        <dbReference type="HAMAP-Rule" id="MF_00274"/>
    </source>
</evidence>
<comment type="function">
    <text evidence="1">Binds to DNA and alters its conformation. May be involved in regulation of gene expression, nucleoid organization and DNA protection.</text>
</comment>
<comment type="subunit">
    <text evidence="1">Homodimer.</text>
</comment>
<comment type="subcellular location">
    <subcellularLocation>
        <location evidence="1">Cytoplasm</location>
        <location evidence="1">Nucleoid</location>
    </subcellularLocation>
</comment>
<comment type="similarity">
    <text evidence="1">Belongs to the YbaB/EbfC family.</text>
</comment>
<organism>
    <name type="scientific">Thermoanaerobacter pseudethanolicus (strain ATCC 33223 / 39E)</name>
    <name type="common">Clostridium thermohydrosulfuricum</name>
    <dbReference type="NCBI Taxonomy" id="340099"/>
    <lineage>
        <taxon>Bacteria</taxon>
        <taxon>Bacillati</taxon>
        <taxon>Bacillota</taxon>
        <taxon>Clostridia</taxon>
        <taxon>Thermoanaerobacterales</taxon>
        <taxon>Thermoanaerobacteraceae</taxon>
        <taxon>Thermoanaerobacter</taxon>
    </lineage>
</organism>
<name>Y2199_THEP3</name>
<protein>
    <recommendedName>
        <fullName evidence="1">Nucleoid-associated protein Teth39_2199</fullName>
    </recommendedName>
</protein>
<gene>
    <name type="ordered locus">Teth39_2199</name>
</gene>
<sequence length="111" mass="11963">MAKGGFPGGFNINNMIKQAQQMQEEIKKMQEELMQKTVEATAGGGMVKAVANGRKELVSIEINPDVVDKDDVETLEDLVLAAVNQALRNAEEMIASEMAKITGGLNIPGLF</sequence>